<name>H13H1_CYRHA</name>
<feature type="signal peptide" evidence="2">
    <location>
        <begin position="1"/>
        <end position="19"/>
    </location>
</feature>
<feature type="propeptide" id="PRO_0000400703" evidence="1">
    <location>
        <begin position="20"/>
        <end position="50"/>
    </location>
</feature>
<feature type="peptide" id="PRO_0000400704" description="U7-theraphotoxin-Hhn1f">
    <location>
        <begin position="51"/>
        <end position="90"/>
    </location>
</feature>
<feature type="disulfide bond" evidence="1">
    <location>
        <begin position="51"/>
        <end position="65"/>
    </location>
</feature>
<feature type="disulfide bond" evidence="1">
    <location>
        <begin position="58"/>
        <end position="70"/>
    </location>
</feature>
<feature type="disulfide bond" evidence="1">
    <location>
        <begin position="64"/>
        <end position="81"/>
    </location>
</feature>
<reference key="1">
    <citation type="journal article" date="2010" name="J. Proteome Res.">
        <title>Molecular diversification of peptide toxins from the tarantula Haplopelma hainanum (Ornithoctonus hainana) venom based on transcriptomic, peptidomic, and genomic analyses.</title>
        <authorList>
            <person name="Tang X."/>
            <person name="Zhang Y."/>
            <person name="Hu W."/>
            <person name="Xu D."/>
            <person name="Tao H."/>
            <person name="Yang X."/>
            <person name="Li Y."/>
            <person name="Jiang L."/>
            <person name="Liang S."/>
        </authorList>
    </citation>
    <scope>NUCLEOTIDE SEQUENCE [LARGE SCALE MRNA]</scope>
    <source>
        <tissue>Venom gland</tissue>
    </source>
</reference>
<keyword id="KW-1015">Disulfide bond</keyword>
<keyword id="KW-0872">Ion channel impairing toxin</keyword>
<keyword id="KW-0960">Knottin</keyword>
<keyword id="KW-0964">Secreted</keyword>
<keyword id="KW-0732">Signal</keyword>
<keyword id="KW-0800">Toxin</keyword>
<organism>
    <name type="scientific">Cyriopagopus hainanus</name>
    <name type="common">Chinese bird spider</name>
    <name type="synonym">Haplopelma hainanum</name>
    <dbReference type="NCBI Taxonomy" id="209901"/>
    <lineage>
        <taxon>Eukaryota</taxon>
        <taxon>Metazoa</taxon>
        <taxon>Ecdysozoa</taxon>
        <taxon>Arthropoda</taxon>
        <taxon>Chelicerata</taxon>
        <taxon>Arachnida</taxon>
        <taxon>Araneae</taxon>
        <taxon>Mygalomorphae</taxon>
        <taxon>Theraphosidae</taxon>
        <taxon>Haplopelma</taxon>
    </lineage>
</organism>
<sequence>MKTAIFTVVLALAVFAVLSFGWEANEKALSEEFTELIHEKEAASETEARGCRYFWGECHDHMPCCDWLVCRYKWPITYNICVWNRTFPEK</sequence>
<proteinExistence type="evidence at transcript level"/>
<evidence type="ECO:0000250" key="1"/>
<evidence type="ECO:0000255" key="2"/>
<evidence type="ECO:0000305" key="3"/>
<protein>
    <recommendedName>
        <fullName>U7-theraphotoxin-Hhn1f</fullName>
        <shortName>U7-TRTX-Hhn1f</shortName>
    </recommendedName>
    <alternativeName>
        <fullName>Hainantoxin-XIII-8</fullName>
        <shortName>HNTX-XIII-8</shortName>
    </alternativeName>
</protein>
<dbReference type="EMBL" id="GU292984">
    <property type="protein sequence ID" value="ADB56800.1"/>
    <property type="molecule type" value="mRNA"/>
</dbReference>
<dbReference type="SMR" id="D2Y2A7"/>
<dbReference type="ArachnoServer" id="AS001692">
    <property type="toxin name" value="U7-theraphotoxin-Hhn1f"/>
</dbReference>
<dbReference type="GO" id="GO:0005576">
    <property type="term" value="C:extracellular region"/>
    <property type="evidence" value="ECO:0007669"/>
    <property type="project" value="UniProtKB-SubCell"/>
</dbReference>
<dbReference type="GO" id="GO:0008200">
    <property type="term" value="F:ion channel inhibitor activity"/>
    <property type="evidence" value="ECO:0007669"/>
    <property type="project" value="InterPro"/>
</dbReference>
<dbReference type="GO" id="GO:0090729">
    <property type="term" value="F:toxin activity"/>
    <property type="evidence" value="ECO:0007669"/>
    <property type="project" value="UniProtKB-KW"/>
</dbReference>
<dbReference type="InterPro" id="IPR011696">
    <property type="entry name" value="Huwentoxin-1"/>
</dbReference>
<dbReference type="Pfam" id="PF07740">
    <property type="entry name" value="Toxin_12"/>
    <property type="match status" value="1"/>
</dbReference>
<dbReference type="SUPFAM" id="SSF57059">
    <property type="entry name" value="omega toxin-like"/>
    <property type="match status" value="1"/>
</dbReference>
<accession>D2Y2A7</accession>
<comment type="function">
    <text evidence="1">Ion channel inhibitor.</text>
</comment>
<comment type="subcellular location">
    <subcellularLocation>
        <location evidence="1">Secreted</location>
    </subcellularLocation>
</comment>
<comment type="tissue specificity">
    <text>Expressed by the venom gland.</text>
</comment>
<comment type="domain">
    <text evidence="1">The presence of a 'disulfide through disulfide knot' structurally defines this protein as a knottin.</text>
</comment>
<comment type="similarity">
    <text evidence="3">Belongs to the neurotoxin 10 (Hwtx-1) family. 13 (Hntx-13) subfamily.</text>
</comment>